<organism>
    <name type="scientific">Yersinia pestis bv. Antiqua (strain Angola)</name>
    <dbReference type="NCBI Taxonomy" id="349746"/>
    <lineage>
        <taxon>Bacteria</taxon>
        <taxon>Pseudomonadati</taxon>
        <taxon>Pseudomonadota</taxon>
        <taxon>Gammaproteobacteria</taxon>
        <taxon>Enterobacterales</taxon>
        <taxon>Yersiniaceae</taxon>
        <taxon>Yersinia</taxon>
    </lineage>
</organism>
<comment type="function">
    <text evidence="1">NQR complex catalyzes the reduction of ubiquinone-1 to ubiquinol by two successive reactions, coupled with the transport of Na(+) ions from the cytoplasm to the periplasm. NqrA to NqrE are probably involved in the second step, the conversion of ubisemiquinone to ubiquinol.</text>
</comment>
<comment type="catalytic activity">
    <reaction evidence="1">
        <text>a ubiquinone + n Na(+)(in) + NADH + H(+) = a ubiquinol + n Na(+)(out) + NAD(+)</text>
        <dbReference type="Rhea" id="RHEA:47748"/>
        <dbReference type="Rhea" id="RHEA-COMP:9565"/>
        <dbReference type="Rhea" id="RHEA-COMP:9566"/>
        <dbReference type="ChEBI" id="CHEBI:15378"/>
        <dbReference type="ChEBI" id="CHEBI:16389"/>
        <dbReference type="ChEBI" id="CHEBI:17976"/>
        <dbReference type="ChEBI" id="CHEBI:29101"/>
        <dbReference type="ChEBI" id="CHEBI:57540"/>
        <dbReference type="ChEBI" id="CHEBI:57945"/>
        <dbReference type="EC" id="7.2.1.1"/>
    </reaction>
</comment>
<comment type="subunit">
    <text evidence="1">Composed of six subunits; NqrA, NqrB, NqrC, NqrD, NqrE and NqrF.</text>
</comment>
<comment type="similarity">
    <text evidence="1">Belongs to the NqrA family.</text>
</comment>
<reference key="1">
    <citation type="journal article" date="2010" name="J. Bacteriol.">
        <title>Genome sequence of the deep-rooted Yersinia pestis strain Angola reveals new insights into the evolution and pangenome of the plague bacterium.</title>
        <authorList>
            <person name="Eppinger M."/>
            <person name="Worsham P.L."/>
            <person name="Nikolich M.P."/>
            <person name="Riley D.R."/>
            <person name="Sebastian Y."/>
            <person name="Mou S."/>
            <person name="Achtman M."/>
            <person name="Lindler L.E."/>
            <person name="Ravel J."/>
        </authorList>
    </citation>
    <scope>NUCLEOTIDE SEQUENCE [LARGE SCALE GENOMIC DNA]</scope>
    <source>
        <strain>Angola</strain>
    </source>
</reference>
<keyword id="KW-0406">Ion transport</keyword>
<keyword id="KW-0520">NAD</keyword>
<keyword id="KW-0915">Sodium</keyword>
<keyword id="KW-0739">Sodium transport</keyword>
<keyword id="KW-1278">Translocase</keyword>
<keyword id="KW-0813">Transport</keyword>
<keyword id="KW-0830">Ubiquinone</keyword>
<accession>A9R2Y6</accession>
<protein>
    <recommendedName>
        <fullName evidence="1">Na(+)-translocating NADH-quinone reductase subunit A</fullName>
        <shortName evidence="1">Na(+)-NQR subunit A</shortName>
        <shortName evidence="1">Na(+)-translocating NQR subunit A</shortName>
        <ecNumber evidence="1">7.2.1.1</ecNumber>
    </recommendedName>
    <alternativeName>
        <fullName evidence="1">NQR complex subunit A</fullName>
    </alternativeName>
    <alternativeName>
        <fullName evidence="1">NQR-1 subunit A</fullName>
    </alternativeName>
</protein>
<name>NQRA_YERPG</name>
<feature type="chain" id="PRO_1000191661" description="Na(+)-translocating NADH-quinone reductase subunit A">
    <location>
        <begin position="1"/>
        <end position="447"/>
    </location>
</feature>
<sequence>MIKIKKGLDLPIAGAPVQTIQDGPAIHHVALLGEEYVGMRPSMLVQEGDQVKKGQALFEDKKNPGVLFTAPASGKISAINRGERRVLQSVVIEVEGDEQIPFEHYAAEELNQLSDEQVQHHLLTSGLWTALRTRPFSKTPVPGSRPRAIFISAMDTQPLAADPQVIIATESEAFNHGLTVLTRLTDGKVHVCHAAGQAVTRHTNTQVTYNEFSGPHPAGLVGTHIHFLEPVSQTKMVWHVGYQDVIAIGKLFTRGELCTDRIVALAGPQVNQPILLRTRLGASLSELTAGKLKEGDNRIISGSVLSGTAFSATHGYLGRFHQQVSVIREGREKELFGWVMPGRDKYSITRTTLGYFFKRKLFAFSTDMHGGERAMVPIGNYERVMPLDILATHLLRDLLAGDTDSAQALGCLELDEEDLALCTFVCPGKYEYGPVLRDILTQIEQEG</sequence>
<dbReference type="EC" id="7.2.1.1" evidence="1"/>
<dbReference type="EMBL" id="CP000901">
    <property type="protein sequence ID" value="ABX86964.1"/>
    <property type="molecule type" value="Genomic_DNA"/>
</dbReference>
<dbReference type="RefSeq" id="WP_012229919.1">
    <property type="nucleotide sequence ID" value="NC_010159.1"/>
</dbReference>
<dbReference type="SMR" id="A9R2Y6"/>
<dbReference type="KEGG" id="ypg:YpAngola_A3317"/>
<dbReference type="PATRIC" id="fig|349746.12.peg.15"/>
<dbReference type="GO" id="GO:0016655">
    <property type="term" value="F:oxidoreductase activity, acting on NAD(P)H, quinone or similar compound as acceptor"/>
    <property type="evidence" value="ECO:0007669"/>
    <property type="project" value="UniProtKB-UniRule"/>
</dbReference>
<dbReference type="GO" id="GO:0006814">
    <property type="term" value="P:sodium ion transport"/>
    <property type="evidence" value="ECO:0007669"/>
    <property type="project" value="UniProtKB-UniRule"/>
</dbReference>
<dbReference type="HAMAP" id="MF_00425">
    <property type="entry name" value="NqrA"/>
    <property type="match status" value="1"/>
</dbReference>
<dbReference type="InterPro" id="IPR008703">
    <property type="entry name" value="NqrA"/>
</dbReference>
<dbReference type="InterPro" id="IPR056148">
    <property type="entry name" value="NQRA_2nd"/>
</dbReference>
<dbReference type="InterPro" id="IPR022615">
    <property type="entry name" value="NqrA_C_domain"/>
</dbReference>
<dbReference type="InterPro" id="IPR056147">
    <property type="entry name" value="NQRA_N"/>
</dbReference>
<dbReference type="NCBIfam" id="TIGR01936">
    <property type="entry name" value="nqrA"/>
    <property type="match status" value="1"/>
</dbReference>
<dbReference type="NCBIfam" id="NF003759">
    <property type="entry name" value="PRK05352.1-2"/>
    <property type="match status" value="1"/>
</dbReference>
<dbReference type="NCBIfam" id="NF003761">
    <property type="entry name" value="PRK05352.1-4"/>
    <property type="match status" value="1"/>
</dbReference>
<dbReference type="PANTHER" id="PTHR37839">
    <property type="entry name" value="NA(+)-TRANSLOCATING NADH-QUINONE REDUCTASE SUBUNIT A"/>
    <property type="match status" value="1"/>
</dbReference>
<dbReference type="PANTHER" id="PTHR37839:SF1">
    <property type="entry name" value="NA(+)-TRANSLOCATING NADH-QUINONE REDUCTASE SUBUNIT A"/>
    <property type="match status" value="1"/>
</dbReference>
<dbReference type="Pfam" id="PF24836">
    <property type="entry name" value="NQRA_2nd"/>
    <property type="match status" value="1"/>
</dbReference>
<dbReference type="Pfam" id="PF05896">
    <property type="entry name" value="NQRA_N"/>
    <property type="match status" value="1"/>
</dbReference>
<dbReference type="Pfam" id="PF11973">
    <property type="entry name" value="NQRA_SLBB"/>
    <property type="match status" value="1"/>
</dbReference>
<evidence type="ECO:0000255" key="1">
    <source>
        <dbReference type="HAMAP-Rule" id="MF_00425"/>
    </source>
</evidence>
<proteinExistence type="inferred from homology"/>
<gene>
    <name evidence="1" type="primary">nqrA</name>
    <name type="ordered locus">YpAngola_A3317</name>
</gene>